<feature type="chain" id="PRO_0000043006" description="GTPase NRas">
    <location>
        <begin position="1"/>
        <end position="186"/>
    </location>
</feature>
<feature type="propeptide" id="PRO_0000043007" description="Removed in mature form" evidence="1">
    <location>
        <begin position="187"/>
        <end position="189"/>
    </location>
</feature>
<feature type="region of interest" description="Hypervariable region">
    <location>
        <begin position="166"/>
        <end position="185"/>
    </location>
</feature>
<feature type="short sequence motif" description="Effector region">
    <location>
        <begin position="32"/>
        <end position="40"/>
    </location>
</feature>
<feature type="binding site" evidence="27">
    <location>
        <begin position="10"/>
        <end position="18"/>
    </location>
    <ligand>
        <name>GTP</name>
        <dbReference type="ChEBI" id="CHEBI:37565"/>
    </ligand>
</feature>
<feature type="binding site" evidence="27">
    <location>
        <begin position="29"/>
        <end position="30"/>
    </location>
    <ligand>
        <name>GTP</name>
        <dbReference type="ChEBI" id="CHEBI:37565"/>
    </ligand>
</feature>
<feature type="binding site" evidence="4">
    <location>
        <begin position="57"/>
        <end position="61"/>
    </location>
    <ligand>
        <name>GTP</name>
        <dbReference type="ChEBI" id="CHEBI:37565"/>
    </ligand>
</feature>
<feature type="binding site" evidence="27">
    <location>
        <begin position="116"/>
        <end position="119"/>
    </location>
    <ligand>
        <name>GTP</name>
        <dbReference type="ChEBI" id="CHEBI:37565"/>
    </ligand>
</feature>
<feature type="modified residue" description="Phosphoserine" evidence="20">
    <location>
        <position position="89"/>
    </location>
</feature>
<feature type="lipid moiety-binding region" description="S-palmitoyl cysteine" evidence="7 16 17">
    <location>
        <position position="181"/>
    </location>
</feature>
<feature type="lipid moiety-binding region" description="S-farnesyl cysteine" evidence="16">
    <location>
        <position position="186"/>
    </location>
</feature>
<feature type="glycosylation site" description="(Microbial infection) O-linked (Glc) threonine; by P.sordellii toxin TcsL" evidence="11">
    <location>
        <position position="35"/>
    </location>
</feature>
<feature type="cross-link" description="Glycyl lysine isopeptide (Lys-Gly) (interchain with G-Cter in ubiquitin)" evidence="29">
    <location>
        <position position="170"/>
    </location>
</feature>
<feature type="sequence variant" id="VAR_021194" description="In leukemia; dbSNP:rs121913250." evidence="19">
    <original>G</original>
    <variation>C</variation>
    <location>
        <position position="12"/>
    </location>
</feature>
<feature type="sequence variant" id="VAR_071129" description="In KNEN and JMML; dbSNP:rs121913237." evidence="8 14">
    <original>G</original>
    <variation>D</variation>
    <location>
        <position position="12"/>
    </location>
</feature>
<feature type="sequence variant" id="VAR_063084" description="In RALD and JMML; dbSNP:rs121434596." evidence="8 9">
    <original>G</original>
    <variation>D</variation>
    <location>
        <position position="13"/>
    </location>
</feature>
<feature type="sequence variant" id="VAR_006845" description="In CMNS and colorectal cancer; somatic mutation; dbSNP:rs121434595." evidence="10 21">
    <original>G</original>
    <variation>R</variation>
    <location>
        <position position="13"/>
    </location>
</feature>
<feature type="sequence variant" id="VAR_071130" description="In KNEN; dbSNP:rs397514553." evidence="14">
    <original>P</original>
    <variation>L</variation>
    <location>
        <position position="34"/>
    </location>
</feature>
<feature type="sequence variant" id="VAR_063085" description="In NS6; hypermorphic mutation; dbSNP:rs267606921." evidence="12">
    <original>T</original>
    <variation>I</variation>
    <location>
        <position position="50"/>
    </location>
</feature>
<feature type="sequence variant" id="VAR_063086" description="In NS6; hypermorphic mutation; dbSNP:rs267606920." evidence="12">
    <original>G</original>
    <variation>E</variation>
    <location>
        <position position="60"/>
    </location>
</feature>
<feature type="sequence variant" id="VAR_006846" description="In CMNS and NCMS; somatic mutation; dbSNP:rs121913254." evidence="15">
    <original>Q</original>
    <variation>K</variation>
    <location>
        <position position="61"/>
    </location>
</feature>
<feature type="sequence variant" id="VAR_006847" description="In CMNS, NCMS, KNEN and NMTC2; also found in lung carcinoma cell and melanoma; impaired GTP hydrolysis activity, trapping NRAS in a constitutive GTP-bound active conformation; promotes melanomagenesis; promotes interaction with SHOC2 and PP1C; dbSNP:rs11554290." evidence="5 10 14 15 20 22 24 25">
    <original>Q</original>
    <variation>R</variation>
    <location>
        <position position="61"/>
    </location>
</feature>
<feature type="mutagenesis site" description="Abolished phosphorylation by STK19." evidence="20">
    <original>S</original>
    <variation>A</variation>
    <location>
        <position position="89"/>
    </location>
</feature>
<feature type="mutagenesis site" description="Loss of GTP-binding activity.">
    <original>R</original>
    <variation>A</variation>
    <location>
        <position position="164"/>
    </location>
</feature>
<feature type="mutagenesis site" description="In N-Ras-2KR mutant; decreased fatty-acylation." evidence="18">
    <original>KK</original>
    <variation>RR</variation>
    <location>
        <begin position="169"/>
        <end position="170"/>
    </location>
</feature>
<feature type="mutagenesis site" description="Loss of plasma membrane localization." evidence="17">
    <original>C</original>
    <variation>S</variation>
    <location>
        <position position="181"/>
    </location>
</feature>
<feature type="strand" evidence="30">
    <location>
        <begin position="2"/>
        <end position="9"/>
    </location>
</feature>
<feature type="helix" evidence="30">
    <location>
        <begin position="16"/>
        <end position="25"/>
    </location>
</feature>
<feature type="strand" evidence="30">
    <location>
        <begin position="36"/>
        <end position="46"/>
    </location>
</feature>
<feature type="strand" evidence="30">
    <location>
        <begin position="49"/>
        <end position="58"/>
    </location>
</feature>
<feature type="helix" evidence="30">
    <location>
        <begin position="62"/>
        <end position="67"/>
    </location>
</feature>
<feature type="helix" evidence="30">
    <location>
        <begin position="68"/>
        <end position="74"/>
    </location>
</feature>
<feature type="strand" evidence="30">
    <location>
        <begin position="76"/>
        <end position="83"/>
    </location>
</feature>
<feature type="helix" evidence="30">
    <location>
        <begin position="84"/>
        <end position="86"/>
    </location>
</feature>
<feature type="helix" evidence="30">
    <location>
        <begin position="88"/>
        <end position="90"/>
    </location>
</feature>
<feature type="helix" evidence="30">
    <location>
        <begin position="91"/>
        <end position="104"/>
    </location>
</feature>
<feature type="strand" evidence="30">
    <location>
        <begin position="111"/>
        <end position="116"/>
    </location>
</feature>
<feature type="helix" evidence="30">
    <location>
        <begin position="124"/>
        <end position="137"/>
    </location>
</feature>
<feature type="strand" evidence="30">
    <location>
        <begin position="141"/>
        <end position="143"/>
    </location>
</feature>
<feature type="turn" evidence="30">
    <location>
        <begin position="146"/>
        <end position="148"/>
    </location>
</feature>
<feature type="helix" evidence="30">
    <location>
        <begin position="152"/>
        <end position="168"/>
    </location>
</feature>
<gene>
    <name type="primary">NRAS</name>
    <name type="synonym">HRAS1</name>
</gene>
<evidence type="ECO:0000250" key="1"/>
<evidence type="ECO:0000250" key="2">
    <source>
        <dbReference type="UniProtKB" id="P01116"/>
    </source>
</evidence>
<evidence type="ECO:0000250" key="3">
    <source>
        <dbReference type="UniProtKB" id="Q04970"/>
    </source>
</evidence>
<evidence type="ECO:0000255" key="4"/>
<evidence type="ECO:0000269" key="5">
    <source>
    </source>
</evidence>
<evidence type="ECO:0000269" key="6">
    <source>
    </source>
</evidence>
<evidence type="ECO:0000269" key="7">
    <source>
    </source>
</evidence>
<evidence type="ECO:0000269" key="8">
    <source>
    </source>
</evidence>
<evidence type="ECO:0000269" key="9">
    <source>
    </source>
</evidence>
<evidence type="ECO:0000269" key="10">
    <source>
    </source>
</evidence>
<evidence type="ECO:0000269" key="11">
    <source>
    </source>
</evidence>
<evidence type="ECO:0000269" key="12">
    <source>
    </source>
</evidence>
<evidence type="ECO:0000269" key="13">
    <source>
    </source>
</evidence>
<evidence type="ECO:0000269" key="14">
    <source>
    </source>
</evidence>
<evidence type="ECO:0000269" key="15">
    <source>
    </source>
</evidence>
<evidence type="ECO:0000269" key="16">
    <source>
    </source>
</evidence>
<evidence type="ECO:0000269" key="17">
    <source>
    </source>
</evidence>
<evidence type="ECO:0000269" key="18">
    <source>
    </source>
</evidence>
<evidence type="ECO:0000269" key="19">
    <source>
    </source>
</evidence>
<evidence type="ECO:0000269" key="20">
    <source>
    </source>
</evidence>
<evidence type="ECO:0000269" key="21">
    <source>
    </source>
</evidence>
<evidence type="ECO:0000269" key="22">
    <source>
    </source>
</evidence>
<evidence type="ECO:0000269" key="23">
    <source>
    </source>
</evidence>
<evidence type="ECO:0000269" key="24">
    <source>
    </source>
</evidence>
<evidence type="ECO:0000269" key="25">
    <source>
    </source>
</evidence>
<evidence type="ECO:0000269" key="26">
    <source>
    </source>
</evidence>
<evidence type="ECO:0000269" key="27">
    <source ref="29"/>
</evidence>
<evidence type="ECO:0000305" key="28"/>
<evidence type="ECO:0000305" key="29">
    <source>
    </source>
</evidence>
<evidence type="ECO:0007829" key="30">
    <source>
        <dbReference type="PDB" id="7F68"/>
    </source>
</evidence>
<organism>
    <name type="scientific">Homo sapiens</name>
    <name type="common">Human</name>
    <dbReference type="NCBI Taxonomy" id="9606"/>
    <lineage>
        <taxon>Eukaryota</taxon>
        <taxon>Metazoa</taxon>
        <taxon>Chordata</taxon>
        <taxon>Craniata</taxon>
        <taxon>Vertebrata</taxon>
        <taxon>Euteleostomi</taxon>
        <taxon>Mammalia</taxon>
        <taxon>Eutheria</taxon>
        <taxon>Euarchontoglires</taxon>
        <taxon>Primates</taxon>
        <taxon>Haplorrhini</taxon>
        <taxon>Catarrhini</taxon>
        <taxon>Hominidae</taxon>
        <taxon>Homo</taxon>
    </lineage>
</organism>
<accession>P01111</accession>
<accession>Q14971</accession>
<accession>Q15104</accession>
<accession>Q15282</accession>
<name>RASN_HUMAN</name>
<proteinExistence type="evidence at protein level"/>
<keyword id="KW-0002">3D-structure</keyword>
<keyword id="KW-0007">Acetylation</keyword>
<keyword id="KW-1003">Cell membrane</keyword>
<keyword id="KW-0225">Disease variant</keyword>
<keyword id="KW-0325">Glycoprotein</keyword>
<keyword id="KW-0333">Golgi apparatus</keyword>
<keyword id="KW-0342">GTP-binding</keyword>
<keyword id="KW-0378">Hydrolase</keyword>
<keyword id="KW-1017">Isopeptide bond</keyword>
<keyword id="KW-0449">Lipoprotein</keyword>
<keyword id="KW-0472">Membrane</keyword>
<keyword id="KW-0488">Methylation</keyword>
<keyword id="KW-0547">Nucleotide-binding</keyword>
<keyword id="KW-0564">Palmitate</keyword>
<keyword id="KW-0597">Phosphoprotein</keyword>
<keyword id="KW-0636">Prenylation</keyword>
<keyword id="KW-1267">Proteomics identification</keyword>
<keyword id="KW-0656">Proto-oncogene</keyword>
<keyword id="KW-1185">Reference proteome</keyword>
<keyword id="KW-0832">Ubl conjugation</keyword>
<comment type="function">
    <text evidence="20">Ras proteins bind GDP/GTP and possess intrinsic GTPase activity.</text>
</comment>
<comment type="catalytic activity">
    <reaction evidence="2">
        <text>GTP + H2O = GDP + phosphate + H(+)</text>
        <dbReference type="Rhea" id="RHEA:19669"/>
        <dbReference type="ChEBI" id="CHEBI:15377"/>
        <dbReference type="ChEBI" id="CHEBI:15378"/>
        <dbReference type="ChEBI" id="CHEBI:37565"/>
        <dbReference type="ChEBI" id="CHEBI:43474"/>
        <dbReference type="ChEBI" id="CHEBI:58189"/>
        <dbReference type="EC" id="3.6.5.2"/>
    </reaction>
</comment>
<comment type="activity regulation">
    <text>Alternates between an inactive form bound to GDP and an active form bound to GTP. Activated by a guanine nucleotide-exchange factor (GEF) and inactivated by a GTPase-activating protein (GAP).</text>
</comment>
<comment type="subunit">
    <text evidence="3 13 23 24 25 26">Interacts (active GTP-bound form preferentially) with RGS14 (By similarity). Interacts (active GTP-bound form) with RASSF7 (PubMed:21278800). Interacts (active GTP-bound form) with both SHOC2 and PP1c (all isoforms) to form a tertiary complex; SHOC2 and PP1c preferably bind M-Ras/MRAS, but they also bind K-Ras/KRAS, N-Ras/NRAS and H-Ras/HRAS (PubMed:36175670, PubMed:35768504, PubMed:35831509, PubMed:35830882).</text>
</comment>
<comment type="interaction">
    <interactant intactId="EBI-721993">
        <id>P01111</id>
    </interactant>
    <interactant intactId="EBI-9383168">
        <id>Q96II5</id>
        <label>ARAF</label>
    </interactant>
    <organismsDiffer>false</organismsDiffer>
    <experiments>3</experiments>
</comment>
<comment type="interaction">
    <interactant intactId="EBI-721993">
        <id>P01111</id>
    </interactant>
    <interactant intactId="EBI-365980">
        <id>P15056</id>
        <label>BRAF</label>
    </interactant>
    <organismsDiffer>false</organismsDiffer>
    <experiments>6</experiments>
</comment>
<comment type="interaction">
    <interactant intactId="EBI-721993">
        <id>P01111</id>
    </interactant>
    <interactant intactId="EBI-9090282">
        <id>P27986-2</id>
        <label>PIK3R1</label>
    </interactant>
    <organismsDiffer>false</organismsDiffer>
    <experiments>3</experiments>
</comment>
<comment type="interaction">
    <interactant intactId="EBI-721993">
        <id>P01111</id>
    </interactant>
    <interactant intactId="EBI-365996">
        <id>P04049</id>
        <label>RAF1</label>
    </interactant>
    <organismsDiffer>false</organismsDiffer>
    <experiments>12</experiments>
</comment>
<comment type="interaction">
    <interactant intactId="EBI-721993">
        <id>P01111</id>
    </interactant>
    <interactant intactId="EBI-12832744">
        <id>P52306-5</id>
        <label>RAP1GDS1</label>
    </interactant>
    <organismsDiffer>false</organismsDiffer>
    <experiments>6</experiments>
</comment>
<comment type="interaction">
    <interactant intactId="EBI-721993">
        <id>P01111</id>
    </interactant>
    <interactant intactId="EBI-2856274">
        <id>Q3MIN7</id>
        <label>RGL3</label>
    </interactant>
    <organismsDiffer>false</organismsDiffer>
    <experiments>3</experiments>
</comment>
<comment type="interaction">
    <interactant intactId="EBI-721993">
        <id>P01111</id>
    </interactant>
    <interactant intactId="EBI-366017">
        <id>Q13671</id>
        <label>RIN1</label>
    </interactant>
    <organismsDiffer>false</organismsDiffer>
    <experiments>13</experiments>
</comment>
<comment type="interaction">
    <interactant intactId="EBI-721993">
        <id>P01111</id>
    </interactant>
    <interactant intactId="EBI-2584830">
        <id>P28028</id>
        <label>Braf</label>
    </interactant>
    <organismsDiffer>true</organismsDiffer>
    <experiments>2</experiments>
</comment>
<comment type="interaction">
    <interactant intactId="EBI-721993">
        <id>P01111</id>
    </interactant>
    <interactant intactId="EBI-397757">
        <id>Q99N57</id>
        <label>Raf1</label>
    </interactant>
    <organismsDiffer>true</organismsDiffer>
    <experiments>2</experiments>
</comment>
<comment type="subcellular location">
    <subcellularLocation>
        <location evidence="6 17">Cell membrane</location>
        <topology evidence="6 17">Lipid-anchor</topology>
        <orientation evidence="6 17">Cytoplasmic side</orientation>
    </subcellularLocation>
    <subcellularLocation>
        <location evidence="6 17">Golgi apparatus membrane</location>
        <topology evidence="6 17">Lipid-anchor</topology>
    </subcellularLocation>
    <text evidence="6 17">Shuttles between the plasma membrane and the Golgi apparatus.</text>
</comment>
<comment type="PTM">
    <text evidence="6 7 16 17">Palmitoylated by the ZDHHC9-GOLGA7 complex (PubMed:16000296). Depalmitoylated by ABHD17A, ABHD17B and ABHD17C (PubMed:26701913). A continuous cycle of de- and re-palmitoylation regulates rapid exchange between plasma membrane and Golgi (PubMed:15705808, PubMed:16000296, PubMed:2661017, PubMed:26701913).</text>
</comment>
<comment type="PTM">
    <text evidence="2">Acetylation at Lys-104 prevents interaction with guanine nucleotide exchange factors (GEFs).</text>
</comment>
<comment type="PTM">
    <text evidence="18">Fatty-acylated at Lys-169 and/or Lys-170.</text>
</comment>
<comment type="PTM">
    <text evidence="29">Ubiquitinated by the BCR(LZTR1) E3 ubiquitin ligase complex at Lys-170 in a non-degradative manner, leading to inhibit Ras signaling by decreasing Ras association with membranes.</text>
</comment>
<comment type="PTM">
    <text evidence="20">Phosphorylation at Ser-89 enhances NRAS association with its downstream effectors.</text>
</comment>
<comment type="PTM">
    <text evidence="11">(Microbial infection) Glucosylated at Thr-35 by P.sordellii toxin TcsL.</text>
</comment>
<comment type="disease" evidence="8">
    <disease id="DI-01851">
        <name>Leukemia, juvenile myelomonocytic</name>
        <acronym>JMML</acronym>
        <description>An aggressive pediatric myelodysplastic syndrome/myeloproliferative disorder characterized by malignant transformation in the hematopoietic stem cell compartment with proliferation of differentiated progeny. Patients have splenomegaly, enlarged lymph nodes, rashes, and hemorrhages.</description>
        <dbReference type="MIM" id="607785"/>
    </disease>
    <text>The disease is caused by variants affecting the gene represented in this entry.</text>
</comment>
<comment type="disease" evidence="12">
    <disease id="DI-02558">
        <name>Noonan syndrome 6</name>
        <acronym>NS6</acronym>
        <description>A form of Noonan syndrome, a disease characterized by short stature, facial dysmorphic features such as hypertelorism, a downward eyeslant and low-set posteriorly rotated ears, and a high incidence of congenital heart defects and hypertrophic cardiomyopathy. Other features can include a short neck with webbing or redundancy of skin, deafness, motor delay, variable intellectual deficits, multiple skeletal defects, cryptorchidism, and bleeding diathesis. Individuals with Noonan syndrome are at risk of juvenile myelomonocytic leukemia, a myeloproliferative disorder characterized by excessive production of myelomonocytic cells.</description>
        <dbReference type="MIM" id="613224"/>
    </disease>
    <text>The disease is caused by variants affecting the gene represented in this entry.</text>
</comment>
<comment type="disease" evidence="9">
    <disease id="DI-03381">
        <name>RAS-associated autoimmune leukoproliferative disorder</name>
        <acronym>RALD</acronym>
        <description>A disorder of apoptosis, characterized by chronic accumulation of non-malignant lymphocytes, defective lymphocyte apoptosis, and an increased risk for the development of hematologic malignancies.</description>
        <dbReference type="MIM" id="614470"/>
    </disease>
    <text>The disease is caused by variants affecting the gene represented in this entry.</text>
</comment>
<comment type="disease" evidence="10 15">
    <disease id="DI-04099">
        <name>Melanocytic nevus syndrome, congenital</name>
        <acronym>CMNS</acronym>
        <description>A syndrome characterized by congenital pigmentary skin lesions which can occur at any site and can cover most of the body surface. These lesions may or may not be hairy. Congenital melanocytic nevi are associated with neuromelanosis (the presence of melanin-producing cells within the brain parenchyma or leptomeninges). Less commonly they are associated with malignant melanoma in childhood, both in the skin and the central nervous system. CMNS patients also tend to have a characteristic facial appearance, including wide or prominent forehead, periorbital fullness, small short nose with narrow nasal bridge, round face, full cheeks, prominent premaxilla, and everted lower lip.</description>
        <dbReference type="MIM" id="137550"/>
    </disease>
    <text>The disease is caused by variants affecting the gene represented in this entry.</text>
</comment>
<comment type="disease" evidence="15">
    <disease id="DI-04100">
        <name>Melanosis, neurocutaneous</name>
        <acronym>NCMS</acronym>
        <description>A rare congenital disease characterized by the presence of giant or multiple melanocytic nevi on the skin, foci of melanin-producing cells within the brain parenchyma, and infiltration of leptomeninges by abnormal melanin deposits. Neurologic abnormalities include seizures, hydrocephalus, arachnoid cysts, tumors, and syringomyelia. Some patients may develop malignant melanoma.</description>
        <dbReference type="MIM" id="249400"/>
    </disease>
    <text>The disease is caused by variants affecting the gene represented in this entry.</text>
</comment>
<comment type="disease" evidence="14">
    <disease id="DI-01860">
        <name>Keratinocytic non-epidermolytic nevus</name>
        <acronym>KNEN</acronym>
        <description>Epidermal nevi of the common, non-organoid and non-epidermolytic type are benign skin lesions and may vary in their extent from a single (usually linear) lesion to widespread and systematized involvement. They may be present at birth or develop early during childhood.</description>
        <dbReference type="MIM" id="162900"/>
    </disease>
    <text>The disease is caused by variants affecting the gene represented in this entry.</text>
</comment>
<comment type="disease" evidence="5">
    <disease id="DI-04532">
        <name>Thyroid cancer, non-medullary, 2</name>
        <acronym>NMTC2</acronym>
        <description>A form of non-medullary thyroid cancer (NMTC), a cancer characterized by tumors originating from the thyroid follicular cells. NMTCs represent approximately 95% of all cases of thyroid cancer and are classified into papillary, follicular, Hurthle cell, and anaplastic neoplasms.</description>
        <dbReference type="MIM" id="188470"/>
    </disease>
    <text>Disease susceptibility is associated with variants affecting the gene represented in this entry.</text>
</comment>
<comment type="miscellaneous">
    <text>Mutations which change AA 12, 13 or 61 activate the potential of Ras to transform cultured cells and are implicated in a variety of human tumors.</text>
</comment>
<comment type="similarity">
    <text evidence="28">Belongs to the small GTPase superfamily. Ras family.</text>
</comment>
<comment type="online information" name="Atlas of Genetics and Cytogenetics in Oncology and Haematology">
    <link uri="https://atlasgeneticsoncology.org/gene/92/NRAS"/>
</comment>
<comment type="online information" name="NRASbase">
    <link uri="https://databases.lovd.nl/shared/genes/NRAS"/>
    <text>NRAS mutation db</text>
</comment>
<comment type="online information" name="Wikipedia">
    <link uri="https://en.wikipedia.org/wiki/RAS_proteins"/>
    <text>RAS proteins entry</text>
</comment>
<reference key="1">
    <citation type="journal article" date="1983" name="Cell">
        <title>Structure and activation of the human N-ras gene.</title>
        <authorList>
            <person name="Taparowsky E."/>
            <person name="Shimizu K."/>
            <person name="Goldfarb M."/>
            <person name="Wigler M."/>
        </authorList>
    </citation>
    <scope>NUCLEOTIDE SEQUENCE [GENOMIC DNA]</scope>
</reference>
<reference key="2">
    <citation type="journal article" date="1985" name="Nucleic Acids Res.">
        <title>Human N-ras: cDNA cloning and gene structure.</title>
        <authorList>
            <person name="Hall A."/>
            <person name="Brown R."/>
        </authorList>
    </citation>
    <scope>NUCLEOTIDE SEQUENCE [MRNA]</scope>
</reference>
<reference key="3">
    <citation type="journal article" date="1984" name="EMBO J.">
        <title>Mechanism of activation of an N-ras gene in the human fibrosarcoma cell line HT1080.</title>
        <authorList>
            <person name="Brown R."/>
            <person name="Marshall C.J."/>
            <person name="Pennie S.G."/>
            <person name="Hall A."/>
        </authorList>
    </citation>
    <scope>NUCLEOTIDE SEQUENCE [GENOMIC DNA]</scope>
    <source>
        <tissue>Fibrosarcoma</tissue>
    </source>
</reference>
<reference key="4">
    <citation type="journal article" date="1984" name="Proc. Natl. Acad. Sci. U.S.A.">
        <title>Mechanism of activation of an N-ras oncogene of SW-1271 human lung carcinoma cells.</title>
        <authorList>
            <person name="Yuasa Y."/>
            <person name="Gol R.A."/>
            <person name="Chang A."/>
            <person name="Chiu I.-M."/>
            <person name="Reddy E.P."/>
            <person name="Tronick S.R."/>
            <person name="Aaronson S.A."/>
        </authorList>
    </citation>
    <scope>NUCLEOTIDE SEQUENCE [GENOMIC DNA]</scope>
    <source>
        <tissue>Lung carcinoma</tissue>
    </source>
</reference>
<reference key="5">
    <citation type="submission" date="2002-03" db="EMBL/GenBank/DDBJ databases">
        <title>cDNA clones of human proteins involved in signal transduction sequenced by the Guthrie cDNA resource center (www.cdna.org).</title>
        <authorList>
            <person name="Puhl H.L. III"/>
            <person name="Ikeda S.R."/>
            <person name="Aronstam R.S."/>
        </authorList>
    </citation>
    <scope>NUCLEOTIDE SEQUENCE [LARGE SCALE MRNA]</scope>
    <source>
        <tissue>Brain</tissue>
    </source>
</reference>
<reference key="6">
    <citation type="submission" date="2003-10" db="EMBL/GenBank/DDBJ databases">
        <authorList>
            <consortium name="NIEHS SNPs program"/>
        </authorList>
    </citation>
    <scope>NUCLEOTIDE SEQUENCE [GENOMIC DNA]</scope>
</reference>
<reference key="7">
    <citation type="journal article" date="2004" name="Genome Res.">
        <title>The status, quality, and expansion of the NIH full-length cDNA project: the Mammalian Gene Collection (MGC).</title>
        <authorList>
            <consortium name="The MGC Project Team"/>
        </authorList>
    </citation>
    <scope>NUCLEOTIDE SEQUENCE [LARGE SCALE MRNA]</scope>
    <source>
        <tissue>Kidney</tissue>
    </source>
</reference>
<reference key="8">
    <citation type="journal article" date="1985" name="Blood">
        <title>Transforming genes in human leukemia cells.</title>
        <authorList>
            <person name="Hirai H."/>
            <person name="Tanaka S."/>
            <person name="Azuma M."/>
            <person name="Anraku Y."/>
            <person name="Kobayashi Y."/>
            <person name="Fujisawa M."/>
            <person name="Okabe T."/>
            <person name="Urabe A."/>
            <person name="Takaku F."/>
        </authorList>
    </citation>
    <scope>NUCLEOTIDE SEQUENCE OF 1-96</scope>
    <scope>VARIANT CYS-12</scope>
    <source>
        <tissue>Leukemia</tissue>
    </source>
</reference>
<reference key="9">
    <citation type="journal article" date="1990" name="Oncogene">
        <title>Transforming genes from familial adenomatous polyposis patient cells detected by a tumorigenicity assay.</title>
        <authorList>
            <person name="Yuasa Y."/>
            <person name="Kamiyama T."/>
            <person name="Kato M."/>
            <person name="Iwama T."/>
            <person name="Ikeuchi T."/>
            <person name="Tonomura A."/>
        </authorList>
    </citation>
    <scope>NUCLEOTIDE SEQUENCE OF 1-29 AND 43-78</scope>
</reference>
<reference key="10">
    <citation type="journal article" date="1985" name="Proc. Natl. Acad. Sci. U.S.A.">
        <title>Activation of an N-ras gene in acute myeloblastic leukemia through somatic mutation in the first exon.</title>
        <authorList>
            <person name="Gambke C."/>
            <person name="Hall A."/>
            <person name="Moroni C."/>
        </authorList>
    </citation>
    <scope>NUCLEOTIDE SEQUENCE [GENOMIC DNA] OF 38-96</scope>
</reference>
<reference key="11">
    <citation type="journal article" date="1987" name="Nature">
        <title>A point mutation at codon 13 of the N-ras oncogene in myelodysplastic syndrome.</title>
        <authorList>
            <person name="Hirai H."/>
            <person name="Kobayashi Y."/>
            <person name="Mano H."/>
            <person name="Hagiwara K."/>
            <person name="Maru Y."/>
            <person name="Omine M."/>
            <person name="Mizoguchi H."/>
            <person name="Nishida J."/>
            <person name="Takaku F."/>
        </authorList>
    </citation>
    <scope>NUCLEOTIDE SEQUENCE [GENOMIC DNA] OF 38-96</scope>
    <source>
        <tissue>Bone marrow</tissue>
    </source>
</reference>
<reference key="12">
    <citation type="journal article" date="1988" name="Cancer Res.">
        <title>Detection of a low frequency of activated ras genes in human melanomas using a tumorigenicity assay.</title>
        <authorList>
            <person name="Raybaud F."/>
            <person name="Noguchi T."/>
            <person name="Marics I."/>
            <person name="Adelaide J."/>
            <person name="Planche J."/>
            <person name="Batoz M."/>
            <person name="Aubet C."/>
            <person name="de Lapeyriere O."/>
            <person name="Birnbaum D."/>
        </authorList>
    </citation>
    <scope>NUCLEOTIDE SEQUENCE [GENOMIC DNA] OF 60-96</scope>
    <scope>VARIANT ARG-61</scope>
</reference>
<reference key="13">
    <citation type="journal article" date="1989" name="Cell">
        <title>All ras proteins are polyisoprenylated but only some are palmitoylated.</title>
        <authorList>
            <person name="Hancock J.F."/>
            <person name="Magee A.I."/>
            <person name="Childs J.E."/>
            <person name="Marshall C.J."/>
        </authorList>
    </citation>
    <scope>PALMITOYLATION AT CYS-181</scope>
    <scope>ISOPRENYLATION AT CYS-186</scope>
</reference>
<reference key="14">
    <citation type="journal article" date="2003" name="J. Clin. Endocrinol. Metab.">
        <title>RAS point mutations and PAX8-PPAR gamma rearrangement in thyroid tumors: evidence for distinct molecular pathways in thyroid follicular carcinoma.</title>
        <authorList>
            <person name="Nikiforova M.N."/>
            <person name="Lynch R.A."/>
            <person name="Biddinger P.W."/>
            <person name="Alexander E.K."/>
            <person name="Dorn G.W. II"/>
            <person name="Tallini G."/>
            <person name="Kroll T.G."/>
            <person name="Nikiforov Y.E."/>
        </authorList>
    </citation>
    <scope>INVOLVEMENT IN NMTC2</scope>
    <scope>VARIANT NMTC2 ARG-61</scope>
</reference>
<reference key="15">
    <citation type="journal article" date="2005" name="J. Biol. Chem.">
        <title>DHHC9 and GCP16 constitute a human protein fatty acyltransferase with specificity for H- and N-Ras.</title>
        <authorList>
            <person name="Swarthout J.T."/>
            <person name="Lobo S."/>
            <person name="Farh L."/>
            <person name="Croke M.R."/>
            <person name="Greentree W.K."/>
            <person name="Deschenes R.J."/>
            <person name="Linder M.E."/>
        </authorList>
    </citation>
    <scope>PALMITOYLATION AT CYS-181</scope>
</reference>
<reference key="16">
    <citation type="journal article" date="2005" name="Science">
        <title>An acylation cycle regulates localization and activity of palmitoylated Ras isoforms.</title>
        <authorList>
            <person name="Rocks O."/>
            <person name="Peyker A."/>
            <person name="Kahms M."/>
            <person name="Verveer P.J."/>
            <person name="Koerner C."/>
            <person name="Lumbierres M."/>
            <person name="Kuhlmann J."/>
            <person name="Waldmann H."/>
            <person name="Wittinghofer A."/>
            <person name="Bastiaens P.I.H."/>
        </authorList>
    </citation>
    <scope>PALMITOYLATION</scope>
    <scope>SUBCELLULAR LOCATION</scope>
</reference>
<reference key="17">
    <citation type="journal article" date="2009" name="FEBS Lett.">
        <title>Distinct kinetics of (H/K/N)Ras glucosylation and Rac1 glucosylation catalysed by Clostridium sordellii lethal toxin.</title>
        <authorList>
            <person name="Huelsenbeck S.C."/>
            <person name="Klose I."/>
            <person name="Reichenbach M."/>
            <person name="Huelsenbeck J."/>
            <person name="Genth H."/>
        </authorList>
    </citation>
    <scope>GLYCOSYLATION AT THR-35 (MICROBIAL INFECTION)</scope>
</reference>
<reference key="18">
    <citation type="journal article" date="2011" name="BMC Syst. Biol.">
        <title>Initial characterization of the human central proteome.</title>
        <authorList>
            <person name="Burkard T.R."/>
            <person name="Planyavsky M."/>
            <person name="Kaupe I."/>
            <person name="Breitwieser F.P."/>
            <person name="Buerckstuemmer T."/>
            <person name="Bennett K.L."/>
            <person name="Superti-Furga G."/>
            <person name="Colinge J."/>
        </authorList>
    </citation>
    <scope>IDENTIFICATION BY MASS SPECTROMETRY [LARGE SCALE ANALYSIS]</scope>
</reference>
<reference key="19">
    <citation type="journal article" date="2011" name="Cell Death Differ.">
        <title>RASSF7 negatively regulates pro-apoptotic JNK signaling by inhibiting the activity of phosphorylated-MKK7.</title>
        <authorList>
            <person name="Takahashi S."/>
            <person name="Ebihara A."/>
            <person name="Kajiho H."/>
            <person name="Kontani K."/>
            <person name="Nishina H."/>
            <person name="Katada T."/>
        </authorList>
    </citation>
    <scope>INTERACTION WITH RASSF7</scope>
</reference>
<reference key="20">
    <citation type="journal article" date="2015" name="Elife">
        <title>ABHD17 proteins are novel protein depalmitoylases that regulate N-Ras palmitate turnover and subcellular localization.</title>
        <authorList>
            <person name="Lin D.T."/>
            <person name="Conibear E."/>
        </authorList>
    </citation>
    <scope>SUBCELLULAR LOCATION</scope>
    <scope>PALMITOYLATION AT CYS-181</scope>
    <scope>MUTAGENESIS OF CYS-181</scope>
</reference>
<reference key="21">
    <citation type="journal article" date="2015" name="Proteomics">
        <title>N-terminome analysis of the human mitochondrial proteome.</title>
        <authorList>
            <person name="Vaca Jacome A.S."/>
            <person name="Rabilloud T."/>
            <person name="Schaeffer-Reiss C."/>
            <person name="Rompais M."/>
            <person name="Ayoub D."/>
            <person name="Lane L."/>
            <person name="Bairoch A."/>
            <person name="Van Dorsselaer A."/>
            <person name="Carapito C."/>
        </authorList>
    </citation>
    <scope>IDENTIFICATION BY MASS SPECTROMETRY [LARGE SCALE ANALYSIS]</scope>
</reference>
<reference key="22">
    <citation type="journal article" date="2017" name="Elife">
        <title>SIRT2 and lysine fatty acylation regulate the transforming activity of K-Ras4a.</title>
        <authorList>
            <person name="Jing H."/>
            <person name="Zhang X."/>
            <person name="Wisner S.A."/>
            <person name="Chen X."/>
            <person name="Spiegelman N.A."/>
            <person name="Linder M.E."/>
            <person name="Lin H."/>
        </authorList>
    </citation>
    <scope>ACYLATION</scope>
    <scope>MUTAGENESIS OF 169-LYS-LYS-170</scope>
</reference>
<reference key="23">
    <citation type="journal article" date="2018" name="Science">
        <title>Mutations in LZTR1 drive human disease by dysregulating RAS ubiquitination.</title>
        <authorList>
            <person name="Steklov M."/>
            <person name="Pandolfi S."/>
            <person name="Baietti M.F."/>
            <person name="Batiuk A."/>
            <person name="Carai P."/>
            <person name="Najm P."/>
            <person name="Zhang M."/>
            <person name="Jang H."/>
            <person name="Renzi F."/>
            <person name="Cai Y."/>
            <person name="Abbasi Asbagh L."/>
            <person name="Pastor T."/>
            <person name="De Troyer M."/>
            <person name="Simicek M."/>
            <person name="Radaelli E."/>
            <person name="Brems H."/>
            <person name="Legius E."/>
            <person name="Tavernier J."/>
            <person name="Gevaert K."/>
            <person name="Impens F."/>
            <person name="Messiaen L."/>
            <person name="Nussinov R."/>
            <person name="Heymans S."/>
            <person name="Eyckerman S."/>
            <person name="Sablina A.A."/>
        </authorList>
    </citation>
    <scope>UBIQUITINATION AT LYS-170</scope>
</reference>
<reference key="24">
    <citation type="journal article" date="2019" name="Cell">
        <title>Pharmacological targeting of STK19 inhibits oncogenic NRAS-driven melanomagenesis.</title>
        <authorList>
            <person name="Yin C."/>
            <person name="Zhu B."/>
            <person name="Zhang T."/>
            <person name="Liu T."/>
            <person name="Chen S."/>
            <person name="Liu Y."/>
            <person name="Li X."/>
            <person name="Miao X."/>
            <person name="Li S."/>
            <person name="Mi X."/>
            <person name="Zhang J."/>
            <person name="Li L."/>
            <person name="Wei G."/>
            <person name="Xu Z.X."/>
            <person name="Gao X."/>
            <person name="Huang C."/>
            <person name="Wei Z."/>
            <person name="Goding C.R."/>
            <person name="Wang P."/>
            <person name="Deng X."/>
            <person name="Cui R."/>
        </authorList>
    </citation>
    <scope>FUNCTION</scope>
    <scope>SUBCELLULAR LOCATION</scope>
    <scope>PHOSPHORYLATION AT SER-89</scope>
    <scope>MUTAGENESIS OF SER-89</scope>
    <scope>VARIANT ARG-61</scope>
    <scope>CHARACTERIZATION OF VARIANT ARG-61</scope>
</reference>
<reference key="25">
    <citation type="journal article" date="2022" name="Nat. Struct. Mol. Biol.">
        <title>Structure of the SHOC2-MRAS-PP1c complex provides insights into RAF activation and Noonan syndrome.</title>
        <authorList>
            <person name="Bonsor D.A."/>
            <person name="Alexander P."/>
            <person name="Snead K."/>
            <person name="Hartig N."/>
            <person name="Drew M."/>
            <person name="Messing S."/>
            <person name="Finci L.I."/>
            <person name="Nissley D.V."/>
            <person name="McCormick F."/>
            <person name="Esposito D."/>
            <person name="Rodriguez-Viciana P."/>
            <person name="Stephen A.G."/>
            <person name="Simanshu D.K."/>
        </authorList>
    </citation>
    <scope>INTERACTION WITH PPP1CA; PPP1CB AND SHOC2</scope>
</reference>
<reference key="26">
    <citation type="journal article" date="2022" name="Nature">
        <title>Structural basis for SHOC2 modulation of RAS signalling.</title>
        <authorList>
            <person name="Liau N.P.D."/>
            <person name="Johnson M.C."/>
            <person name="Izadi S."/>
            <person name="Gerosa L."/>
            <person name="Hammel M."/>
            <person name="Bruning J.M."/>
            <person name="Wendorff T.J."/>
            <person name="Phung W."/>
            <person name="Hymowitz S.G."/>
            <person name="Sudhamsu J."/>
        </authorList>
    </citation>
    <scope>INTERACTION WITH PPP1CA; PPP1CB; PPP1CC AND SHOC2</scope>
</reference>
<reference key="27">
    <citation type="journal article" date="2022" name="Nature">
        <title>Structure-function analysis of the SHOC2-MRAS-PP1c holophosphatase complex.</title>
        <authorList>
            <person name="Kwon J.J."/>
            <person name="Hajian B."/>
            <person name="Bian Y."/>
            <person name="Young L.C."/>
            <person name="Amor A.J."/>
            <person name="Fuller J.R."/>
            <person name="Fraley C.V."/>
            <person name="Sykes A.M."/>
            <person name="So J."/>
            <person name="Pan J."/>
            <person name="Baker L."/>
            <person name="Lee S.J."/>
            <person name="Wheeler D.B."/>
            <person name="Mayhew D.L."/>
            <person name="Persky N.S."/>
            <person name="Yang X."/>
            <person name="Root D.E."/>
            <person name="Barsotti A.M."/>
            <person name="Stamford A.W."/>
            <person name="Perry C.K."/>
            <person name="Burgin A."/>
            <person name="McCormick F."/>
            <person name="Lemke C.T."/>
            <person name="Hahn W.C."/>
            <person name="Aguirre A.J."/>
        </authorList>
    </citation>
    <scope>INTERACTION WITH PPP1CA; PPP1CB; PPP1CC AND SHOC2</scope>
    <scope>CHARACTERIZATION OF VARIANT GLN-61</scope>
</reference>
<reference key="28">
    <citation type="journal article" date="2022" name="Nature">
        <title>Structure of the MRAS-SHOC2-PP1C phosphatase complex.</title>
        <authorList>
            <person name="Hauseman Z.J."/>
            <person name="Fodor M."/>
            <person name="Dhembi A."/>
            <person name="Viscomi J."/>
            <person name="Egli D."/>
            <person name="Bleu M."/>
            <person name="Katz S."/>
            <person name="Park E."/>
            <person name="Jang D.M."/>
            <person name="Porter K.A."/>
            <person name="Meili F."/>
            <person name="Guo H."/>
            <person name="Kerr G."/>
            <person name="Molle S."/>
            <person name="Velez-Vega C."/>
            <person name="Beyer K.S."/>
            <person name="Galli G.G."/>
            <person name="Maira S.M."/>
            <person name="Stams T."/>
            <person name="Clark K."/>
            <person name="Eck M.J."/>
            <person name="Tordella L."/>
            <person name="Thoma C.R."/>
            <person name="King D.A."/>
        </authorList>
    </citation>
    <scope>INTERACTION WITH PPP1CA AND SHOC2</scope>
    <scope>CHARACTERIZATION OF VARIANT GLN-61</scope>
</reference>
<reference key="29">
    <citation type="submission" date="2008-03" db="PDB data bank">
        <title>Crystal structure of the human NRAS GTPase bound with GDP.</title>
        <authorList>
            <person name="Nedyalkova L."/>
            <person name="Tong Y."/>
            <person name="Tempel W."/>
            <person name="Shen L."/>
            <person name="Loppnau P."/>
            <person name="Arrowsmith C.H."/>
            <person name="Edwards A.M."/>
            <person name="Bountra C."/>
            <person name="Weigelt J."/>
            <person name="Bochkarev A."/>
            <person name="Park H."/>
        </authorList>
    </citation>
    <scope>X-RAY CRYSTALLOGRAPHY (1.65 ANGSTROMS) OF 1-172 IN COMPLEX WITH GDP</scope>
</reference>
<reference key="30">
    <citation type="journal article" date="1987" name="Jpn. J. Cancer Res.">
        <title>Amino-acid substitution at codon 13 of the N-ras oncogene in rectal cancer in a Japanese patient.</title>
        <authorList>
            <person name="Nitta N."/>
            <person name="Ochiai M."/>
            <person name="Nagao M."/>
            <person name="Sugimura T."/>
        </authorList>
    </citation>
    <scope>VARIANT COLORECTAL CANCER ARG-13</scope>
</reference>
<reference key="31">
    <citation type="journal article" date="2007" name="Blood">
        <title>Spontaneous improvement of hematologic abnormalities in patients having juvenile myelomonocytic leukemia with specific RAS mutations.</title>
        <authorList>
            <person name="Matsuda K."/>
            <person name="Shimada A."/>
            <person name="Yoshida N."/>
            <person name="Ogawa A."/>
            <person name="Watanabe A."/>
            <person name="Yajima S."/>
            <person name="Iizuka S."/>
            <person name="Koike K."/>
            <person name="Yanai F."/>
            <person name="Kawasaki K."/>
            <person name="Yanagimachi M."/>
            <person name="Kikuchi A."/>
            <person name="Ohtsuka Y."/>
            <person name="Hidaka E."/>
            <person name="Yamauchi K."/>
            <person name="Tanaka M."/>
            <person name="Yanagisawa R."/>
            <person name="Nakazawa Y."/>
            <person name="Shiohara M."/>
            <person name="Manabe A."/>
            <person name="Kojima S."/>
            <person name="Koike K."/>
        </authorList>
    </citation>
    <scope>VARIANTS JMML ASP-12 AND ASP-13</scope>
</reference>
<reference key="32">
    <citation type="journal article" date="2007" name="Proc. Natl. Acad. Sci. U.S.A.">
        <title>NRAS mutation causes a human autoimmune lymphoproliferative syndrome.</title>
        <authorList>
            <person name="Oliveira J.B."/>
            <person name="Bidere N."/>
            <person name="Niemela J.E."/>
            <person name="Zheng L."/>
            <person name="Sakai K."/>
            <person name="Nix C.P."/>
            <person name="Danner R.L."/>
            <person name="Barb J."/>
            <person name="Munson P.J."/>
            <person name="Puck J.M."/>
            <person name="Dale J."/>
            <person name="Straus S.E."/>
            <person name="Fleisher T.A."/>
            <person name="Lenardo M.J."/>
        </authorList>
    </citation>
    <scope>VARIANT RALD ASP-13</scope>
</reference>
<reference key="33">
    <citation type="journal article" date="2009" name="J. Invest. Dermatol.">
        <title>Genotypic and gene expression studies in congenital melanocytic nevi: insight into initial steps of melanotumorigenesis.</title>
        <authorList>
            <person name="Dessars B."/>
            <person name="De Raeve L.E."/>
            <person name="Morandini R."/>
            <person name="Lefort A."/>
            <person name="El Housni H."/>
            <person name="Ghanem G.E."/>
            <person name="Van den Eynde B.J."/>
            <person name="Ma W."/>
            <person name="Roseeuw D."/>
            <person name="Vassart G."/>
            <person name="Libert F."/>
            <person name="Heimann P."/>
        </authorList>
    </citation>
    <scope>VARIANTS CMNS ARG-13 AND ARG-61</scope>
</reference>
<reference key="34">
    <citation type="journal article" date="2010" name="Nat. Genet.">
        <title>A restricted spectrum of NRAS mutations causes Noonan syndrome.</title>
        <authorList>
            <person name="Cirstea I.C."/>
            <person name="Kutsche K."/>
            <person name="Dvorsky R."/>
            <person name="Gremer L."/>
            <person name="Carta C."/>
            <person name="Horn D."/>
            <person name="Roberts A.E."/>
            <person name="Lepri F."/>
            <person name="Merbitz-Zahradnik T."/>
            <person name="Konig R."/>
            <person name="Kratz C.P."/>
            <person name="Pantaleoni F."/>
            <person name="Dentici M.L."/>
            <person name="Joshi V.A."/>
            <person name="Kucherlapati R.S."/>
            <person name="Mazzanti L."/>
            <person name="Mundlos S."/>
            <person name="Patton M.A."/>
            <person name="Silengo M.C."/>
            <person name="Rossi C."/>
            <person name="Zampino G."/>
            <person name="Digilio C."/>
            <person name="Stuppia L."/>
            <person name="Seemanova E."/>
            <person name="Pennacchio L.A."/>
            <person name="Gelb B.D."/>
            <person name="Dallapiccola B."/>
            <person name="Wittinghofer A."/>
            <person name="Ahmadian M.R."/>
            <person name="Tartaglia M."/>
            <person name="Zenker M."/>
        </authorList>
    </citation>
    <scope>VARIANTS NS6 ILE-50 AND GLU-60</scope>
    <scope>CHARACTERIZATION OF VARIANTS NS6 ILE-50 AND GLU-60</scope>
</reference>
<reference key="35">
    <citation type="journal article" date="2012" name="J. Med. Genet.">
        <title>Keratinocytic epidermal nevi are associated with mosaic RAS mutations.</title>
        <authorList>
            <person name="Hafner C."/>
            <person name="Toll A."/>
            <person name="Gantner S."/>
            <person name="Mauerer A."/>
            <person name="Lurkin I."/>
            <person name="Acquadro F."/>
            <person name="Fernandez-Casado A."/>
            <person name="Zwarthoff E.C."/>
            <person name="Dietmaier W."/>
            <person name="Baselga E."/>
            <person name="Parera E."/>
            <person name="Vicente A."/>
            <person name="Casanova A."/>
            <person name="Cigudosa J."/>
            <person name="Mentzel T."/>
            <person name="Pujol R.M."/>
            <person name="Landthaler M."/>
            <person name="Real F.X."/>
        </authorList>
    </citation>
    <scope>VARIANTS KNEN ASP-12; LEU-34 AND ARG-61</scope>
</reference>
<reference key="36">
    <citation type="journal article" date="2013" name="J. Invest. Dermatol.">
        <title>Multiple congenital melanocytic nevi and neurocutaneous melanosis are caused by postzygotic mutations in codon 61 of NRAS.</title>
        <authorList>
            <person name="Kinsler V.A."/>
            <person name="Thomas A.C."/>
            <person name="Ishida M."/>
            <person name="Bulstrode N.W."/>
            <person name="Loughlin S."/>
            <person name="Hing S."/>
            <person name="Chalker J."/>
            <person name="McKenzie K."/>
            <person name="Abu-Amero S."/>
            <person name="Slater O."/>
            <person name="Chanudet E."/>
            <person name="Palmer R."/>
            <person name="Morrogh D."/>
            <person name="Stanier P."/>
            <person name="Healy E."/>
            <person name="Sebire N.J."/>
            <person name="Moore G.E."/>
        </authorList>
    </citation>
    <scope>VARIANTS CMNS ARG-61 AND LYS-61</scope>
    <scope>VARIANTS NCMS ARG-61 AND LYS-61</scope>
</reference>
<protein>
    <recommendedName>
        <fullName>GTPase NRas</fullName>
        <ecNumber evidence="2">3.6.5.2</ecNumber>
    </recommendedName>
    <alternativeName>
        <fullName>Transforming protein N-Ras</fullName>
    </alternativeName>
</protein>
<sequence>MTEYKLVVVGAGGVGKSALTIQLIQNHFVDEYDPTIEDSYRKQVVIDGETCLLDILDTAGQEEYSAMRDQYMRTGEGFLCVFAINNSKSFADINLYREQIKRVKDSDDVPMVLVGNKCDLPTRTVDTKQAHELAKSYGIPFIETSAKTRQGVEDAFYTLVREIRQYRMKKLNSSDDGTQGCMGLPCVVM</sequence>
<dbReference type="EC" id="3.6.5.2" evidence="2"/>
<dbReference type="EMBL" id="X02751">
    <property type="protein sequence ID" value="CAA26529.1"/>
    <property type="molecule type" value="mRNA"/>
</dbReference>
<dbReference type="EMBL" id="X00642">
    <property type="protein sequence ID" value="CAA25269.1"/>
    <property type="molecule type" value="Genomic_DNA"/>
</dbReference>
<dbReference type="EMBL" id="X00643">
    <property type="protein sequence ID" value="CAA25270.1"/>
    <property type="molecule type" value="Genomic_DNA"/>
</dbReference>
<dbReference type="EMBL" id="X00644">
    <property type="protein sequence ID" value="CAA25271.1"/>
    <property type="molecule type" value="Genomic_DNA"/>
</dbReference>
<dbReference type="EMBL" id="X00645">
    <property type="protein sequence ID" value="CAA25272.1"/>
    <property type="molecule type" value="Genomic_DNA"/>
</dbReference>
<dbReference type="EMBL" id="L00043">
    <property type="protein sequence ID" value="AAA60255.1"/>
    <property type="molecule type" value="Genomic_DNA"/>
</dbReference>
<dbReference type="EMBL" id="L00040">
    <property type="protein sequence ID" value="AAA60255.1"/>
    <property type="status" value="JOINED"/>
    <property type="molecule type" value="Genomic_DNA"/>
</dbReference>
<dbReference type="EMBL" id="L00041">
    <property type="protein sequence ID" value="AAA60255.1"/>
    <property type="status" value="JOINED"/>
    <property type="molecule type" value="Genomic_DNA"/>
</dbReference>
<dbReference type="EMBL" id="L00042">
    <property type="protein sequence ID" value="AAA60255.1"/>
    <property type="status" value="JOINED"/>
    <property type="molecule type" value="Genomic_DNA"/>
</dbReference>
<dbReference type="EMBL" id="AF493919">
    <property type="protein sequence ID" value="AAM12633.1"/>
    <property type="molecule type" value="mRNA"/>
</dbReference>
<dbReference type="EMBL" id="AY428630">
    <property type="protein sequence ID" value="AAQ94397.1"/>
    <property type="molecule type" value="Genomic_DNA"/>
</dbReference>
<dbReference type="EMBL" id="BC005219">
    <property type="protein sequence ID" value="AAH05219.1"/>
    <property type="molecule type" value="mRNA"/>
</dbReference>
<dbReference type="EMBL" id="M25898">
    <property type="protein sequence ID" value="AAA36548.1"/>
    <property type="molecule type" value="Genomic_DNA"/>
</dbReference>
<dbReference type="EMBL" id="X53291">
    <property type="protein sequence ID" value="CAA37384.1"/>
    <property type="molecule type" value="Genomic_DNA"/>
</dbReference>
<dbReference type="EMBL" id="X53292">
    <property type="protein sequence ID" value="CAA37384.1"/>
    <property type="status" value="JOINED"/>
    <property type="molecule type" value="Genomic_DNA"/>
</dbReference>
<dbReference type="EMBL" id="K03211">
    <property type="protein sequence ID" value="AAA36556.1"/>
    <property type="molecule type" value="Genomic_DNA"/>
</dbReference>
<dbReference type="EMBL" id="M10055">
    <property type="protein sequence ID" value="AAA36556.1"/>
    <property type="status" value="JOINED"/>
    <property type="molecule type" value="Genomic_DNA"/>
</dbReference>
<dbReference type="EMBL" id="X05565">
    <property type="protein sequence ID" value="CAA29079.1"/>
    <property type="molecule type" value="Genomic_DNA"/>
</dbReference>
<dbReference type="EMBL" id="X07440">
    <property type="protein sequence ID" value="CAA30320.1"/>
    <property type="molecule type" value="Genomic_DNA"/>
</dbReference>
<dbReference type="CCDS" id="CCDS877.1"/>
<dbReference type="PIR" id="A90839">
    <property type="entry name" value="TVHURA"/>
</dbReference>
<dbReference type="PIR" id="I38149">
    <property type="entry name" value="I38149"/>
</dbReference>
<dbReference type="RefSeq" id="NP_002515.1">
    <property type="nucleotide sequence ID" value="NM_002524.5"/>
</dbReference>
<dbReference type="PDB" id="2N9C">
    <property type="method" value="NMR"/>
    <property type="chains" value="A=1-17"/>
</dbReference>
<dbReference type="PDB" id="3CON">
    <property type="method" value="X-ray"/>
    <property type="resolution" value="1.65 A"/>
    <property type="chains" value="A=1-172"/>
</dbReference>
<dbReference type="PDB" id="5UHV">
    <property type="method" value="X-ray"/>
    <property type="resolution" value="1.67 A"/>
    <property type="chains" value="A=1-166"/>
</dbReference>
<dbReference type="PDB" id="6E6H">
    <property type="method" value="X-ray"/>
    <property type="resolution" value="1.99 A"/>
    <property type="chains" value="A=1-166"/>
</dbReference>
<dbReference type="PDB" id="6MPP">
    <property type="method" value="NMR"/>
    <property type="chains" value="B=55-64"/>
</dbReference>
<dbReference type="PDB" id="6ULI">
    <property type="method" value="X-ray"/>
    <property type="resolution" value="1.88 A"/>
    <property type="chains" value="C=10-18"/>
</dbReference>
<dbReference type="PDB" id="6ULK">
    <property type="method" value="X-ray"/>
    <property type="resolution" value="1.90 A"/>
    <property type="chains" value="C=10-19"/>
</dbReference>
<dbReference type="PDB" id="6ULN">
    <property type="method" value="X-ray"/>
    <property type="resolution" value="2.01 A"/>
    <property type="chains" value="C=10-18"/>
</dbReference>
<dbReference type="PDB" id="6ULR">
    <property type="method" value="X-ray"/>
    <property type="resolution" value="3.20 A"/>
    <property type="chains" value="C=10-18"/>
</dbReference>
<dbReference type="PDB" id="6UON">
    <property type="method" value="X-ray"/>
    <property type="resolution" value="3.50 A"/>
    <property type="chains" value="C/F=10-19"/>
</dbReference>
<dbReference type="PDB" id="6WGH">
    <property type="method" value="X-ray"/>
    <property type="resolution" value="1.65 A"/>
    <property type="chains" value="A/B=1-170"/>
</dbReference>
<dbReference type="PDB" id="6ZIO">
    <property type="method" value="X-ray"/>
    <property type="resolution" value="1.55 A"/>
    <property type="chains" value="A/B=1-172"/>
</dbReference>
<dbReference type="PDB" id="6ZIR">
    <property type="method" value="X-ray"/>
    <property type="resolution" value="1.90 A"/>
    <property type="chains" value="A=1-172"/>
</dbReference>
<dbReference type="PDB" id="6ZIZ">
    <property type="method" value="X-ray"/>
    <property type="resolution" value="1.78 A"/>
    <property type="chains" value="A/B=1-172"/>
</dbReference>
<dbReference type="PDB" id="7F68">
    <property type="method" value="X-ray"/>
    <property type="resolution" value="1.24 A"/>
    <property type="chains" value="A=1-169"/>
</dbReference>
<dbReference type="PDB" id="7OW3">
    <property type="method" value="X-ray"/>
    <property type="resolution" value="2.46 A"/>
    <property type="chains" value="C/F/I/L=7-16"/>
</dbReference>
<dbReference type="PDB" id="7OW4">
    <property type="method" value="X-ray"/>
    <property type="resolution" value="1.81 A"/>
    <property type="chains" value="C/F/I/L=7-16"/>
</dbReference>
<dbReference type="PDB" id="7OW5">
    <property type="method" value="X-ray"/>
    <property type="resolution" value="2.58 A"/>
    <property type="chains" value="C=7-16"/>
</dbReference>
<dbReference type="PDB" id="7OW6">
    <property type="method" value="X-ray"/>
    <property type="resolution" value="2.64 A"/>
    <property type="chains" value="C=7-16"/>
</dbReference>
<dbReference type="PDB" id="7PB2">
    <property type="method" value="X-ray"/>
    <property type="resolution" value="3.41 A"/>
    <property type="chains" value="C/H=7-16"/>
</dbReference>
<dbReference type="PDB" id="8TBI">
    <property type="method" value="X-ray"/>
    <property type="resolution" value="1.59 A"/>
    <property type="chains" value="A/B=1-172"/>
</dbReference>
<dbReference type="PDB" id="8VM2">
    <property type="method" value="X-ray"/>
    <property type="resolution" value="1.74 A"/>
    <property type="chains" value="A/B/C=1-172"/>
</dbReference>
<dbReference type="PDBsum" id="2N9C"/>
<dbReference type="PDBsum" id="3CON"/>
<dbReference type="PDBsum" id="5UHV"/>
<dbReference type="PDBsum" id="6E6H"/>
<dbReference type="PDBsum" id="6MPP"/>
<dbReference type="PDBsum" id="6ULI"/>
<dbReference type="PDBsum" id="6ULK"/>
<dbReference type="PDBsum" id="6ULN"/>
<dbReference type="PDBsum" id="6ULR"/>
<dbReference type="PDBsum" id="6UON"/>
<dbReference type="PDBsum" id="6WGH"/>
<dbReference type="PDBsum" id="6ZIO"/>
<dbReference type="PDBsum" id="6ZIR"/>
<dbReference type="PDBsum" id="6ZIZ"/>
<dbReference type="PDBsum" id="7F68"/>
<dbReference type="PDBsum" id="7OW3"/>
<dbReference type="PDBsum" id="7OW4"/>
<dbReference type="PDBsum" id="7OW5"/>
<dbReference type="PDBsum" id="7OW6"/>
<dbReference type="PDBsum" id="7PB2"/>
<dbReference type="PDBsum" id="8TBI"/>
<dbReference type="PDBsum" id="8VM2"/>
<dbReference type="SMR" id="P01111"/>
<dbReference type="BioGRID" id="110952">
    <property type="interactions" value="709"/>
</dbReference>
<dbReference type="CORUM" id="P01111"/>
<dbReference type="DIP" id="DIP-1058N"/>
<dbReference type="ELM" id="P01111"/>
<dbReference type="FunCoup" id="P01111">
    <property type="interactions" value="3904"/>
</dbReference>
<dbReference type="IntAct" id="P01111">
    <property type="interactions" value="549"/>
</dbReference>
<dbReference type="MINT" id="P01111"/>
<dbReference type="STRING" id="9606.ENSP00000358548"/>
<dbReference type="BindingDB" id="P01111"/>
<dbReference type="ChEMBL" id="CHEMBL2079845"/>
<dbReference type="DrugBank" id="DB12681">
    <property type="generic name" value="Salirasib"/>
</dbReference>
<dbReference type="DrugCentral" id="P01111"/>
<dbReference type="GuidetoPHARMACOLOGY" id="2823"/>
<dbReference type="GlyCosmos" id="P01111">
    <property type="glycosylation" value="1 site, No reported glycans"/>
</dbReference>
<dbReference type="GlyGen" id="P01111">
    <property type="glycosylation" value="3 sites, 1 O-linked glycan (1 site)"/>
</dbReference>
<dbReference type="iPTMnet" id="P01111"/>
<dbReference type="MetOSite" id="P01111"/>
<dbReference type="PhosphoSitePlus" id="P01111"/>
<dbReference type="SwissPalm" id="P01111"/>
<dbReference type="BioMuta" id="NRAS"/>
<dbReference type="DMDM" id="131883"/>
<dbReference type="OGP" id="P01111"/>
<dbReference type="CPTAC" id="CPTAC-1549"/>
<dbReference type="jPOST" id="P01111"/>
<dbReference type="MassIVE" id="P01111"/>
<dbReference type="PaxDb" id="9606-ENSP00000358548"/>
<dbReference type="PeptideAtlas" id="P01111"/>
<dbReference type="ProteomicsDB" id="51320"/>
<dbReference type="Pumba" id="P01111"/>
<dbReference type="ABCD" id="P01111">
    <property type="antibodies" value="1 sequenced antibody"/>
</dbReference>
<dbReference type="Antibodypedia" id="4118">
    <property type="antibodies" value="554 antibodies from 41 providers"/>
</dbReference>
<dbReference type="DNASU" id="4893"/>
<dbReference type="Ensembl" id="ENST00000369535.5">
    <property type="protein sequence ID" value="ENSP00000358548.4"/>
    <property type="gene ID" value="ENSG00000213281.5"/>
</dbReference>
<dbReference type="GeneID" id="4893"/>
<dbReference type="KEGG" id="hsa:4893"/>
<dbReference type="MANE-Select" id="ENST00000369535.5">
    <property type="protein sequence ID" value="ENSP00000358548.4"/>
    <property type="RefSeq nucleotide sequence ID" value="NM_002524.5"/>
    <property type="RefSeq protein sequence ID" value="NP_002515.1"/>
</dbReference>
<dbReference type="AGR" id="HGNC:7989"/>
<dbReference type="CTD" id="4893"/>
<dbReference type="DisGeNET" id="4893"/>
<dbReference type="GeneCards" id="NRAS"/>
<dbReference type="GeneReviews" id="NRAS"/>
<dbReference type="HGNC" id="HGNC:7989">
    <property type="gene designation" value="NRAS"/>
</dbReference>
<dbReference type="HPA" id="ENSG00000213281">
    <property type="expression patterns" value="Low tissue specificity"/>
</dbReference>
<dbReference type="MalaCards" id="NRAS"/>
<dbReference type="MIM" id="137550">
    <property type="type" value="phenotype"/>
</dbReference>
<dbReference type="MIM" id="162900">
    <property type="type" value="phenotype"/>
</dbReference>
<dbReference type="MIM" id="164790">
    <property type="type" value="gene"/>
</dbReference>
<dbReference type="MIM" id="188470">
    <property type="type" value="phenotype"/>
</dbReference>
<dbReference type="MIM" id="249400">
    <property type="type" value="phenotype"/>
</dbReference>
<dbReference type="MIM" id="607785">
    <property type="type" value="phenotype"/>
</dbReference>
<dbReference type="MIM" id="613224">
    <property type="type" value="phenotype"/>
</dbReference>
<dbReference type="MIM" id="614470">
    <property type="type" value="phenotype"/>
</dbReference>
<dbReference type="neXtProt" id="NX_P01111"/>
<dbReference type="OpenTargets" id="ENSG00000213281"/>
<dbReference type="Orphanet" id="146">
    <property type="disease" value="Differentiated thyroid carcinoma"/>
</dbReference>
<dbReference type="Orphanet" id="86834">
    <property type="disease" value="Juvenile myelomonocytic leukemia"/>
</dbReference>
<dbReference type="Orphanet" id="389">
    <property type="disease" value="Langerhans cell histiocytosis"/>
</dbReference>
<dbReference type="Orphanet" id="626">
    <property type="disease" value="Large/giant congenital melanocytic nevus"/>
</dbReference>
<dbReference type="Orphanet" id="2612">
    <property type="disease" value="Linear nevus sebaceus syndrome"/>
</dbReference>
<dbReference type="Orphanet" id="648">
    <property type="disease" value="Noonan syndrome"/>
</dbReference>
<dbReference type="Orphanet" id="268114">
    <property type="disease" value="RAS-associated autoimmune leukoproliferative disease"/>
</dbReference>
<dbReference type="PharmGKB" id="PA31768"/>
<dbReference type="VEuPathDB" id="HostDB:ENSG00000213281"/>
<dbReference type="eggNOG" id="KOG0395">
    <property type="taxonomic scope" value="Eukaryota"/>
</dbReference>
<dbReference type="GeneTree" id="ENSGT00940000158947"/>
<dbReference type="HOGENOM" id="CLU_041217_9_8_1"/>
<dbReference type="InParanoid" id="P01111"/>
<dbReference type="OMA" id="RAVDIWG"/>
<dbReference type="OrthoDB" id="5976022at2759"/>
<dbReference type="PAN-GO" id="P01111">
    <property type="GO annotations" value="5 GO annotations based on evolutionary models"/>
</dbReference>
<dbReference type="PhylomeDB" id="P01111"/>
<dbReference type="TreeFam" id="TF312796"/>
<dbReference type="PathwayCommons" id="P01111"/>
<dbReference type="Reactome" id="R-HSA-112412">
    <property type="pathway name" value="SOS-mediated signalling"/>
</dbReference>
<dbReference type="Reactome" id="R-HSA-1169092">
    <property type="pathway name" value="Activation of RAS in B cells"/>
</dbReference>
<dbReference type="Reactome" id="R-HSA-1236382">
    <property type="pathway name" value="Constitutive Signaling by Ligand-Responsive EGFR Cancer Variants"/>
</dbReference>
<dbReference type="Reactome" id="R-HSA-1250196">
    <property type="pathway name" value="SHC1 events in ERBB2 signaling"/>
</dbReference>
<dbReference type="Reactome" id="R-HSA-1250347">
    <property type="pathway name" value="SHC1 events in ERBB4 signaling"/>
</dbReference>
<dbReference type="Reactome" id="R-HSA-1433557">
    <property type="pathway name" value="Signaling by SCF-KIT"/>
</dbReference>
<dbReference type="Reactome" id="R-HSA-167044">
    <property type="pathway name" value="Signalling to RAS"/>
</dbReference>
<dbReference type="Reactome" id="R-HSA-171007">
    <property type="pathway name" value="p38MAPK events"/>
</dbReference>
<dbReference type="Reactome" id="R-HSA-179812">
    <property type="pathway name" value="GRB2 events in EGFR signaling"/>
</dbReference>
<dbReference type="Reactome" id="R-HSA-180336">
    <property type="pathway name" value="SHC1 events in EGFR signaling"/>
</dbReference>
<dbReference type="Reactome" id="R-HSA-186763">
    <property type="pathway name" value="Downstream signal transduction"/>
</dbReference>
<dbReference type="Reactome" id="R-HSA-1963640">
    <property type="pathway name" value="GRB2 events in ERBB2 signaling"/>
</dbReference>
<dbReference type="Reactome" id="R-HSA-210993">
    <property type="pathway name" value="Tie2 Signaling"/>
</dbReference>
<dbReference type="Reactome" id="R-HSA-2179392">
    <property type="pathway name" value="EGFR Transactivation by Gastrin"/>
</dbReference>
<dbReference type="Reactome" id="R-HSA-2424491">
    <property type="pathway name" value="DAP12 signaling"/>
</dbReference>
<dbReference type="Reactome" id="R-HSA-2428933">
    <property type="pathway name" value="SHC-related events triggered by IGF1R"/>
</dbReference>
<dbReference type="Reactome" id="R-HSA-2871796">
    <property type="pathway name" value="FCERI mediated MAPK activation"/>
</dbReference>
<dbReference type="Reactome" id="R-HSA-375165">
    <property type="pathway name" value="NCAM signaling for neurite out-growth"/>
</dbReference>
<dbReference type="Reactome" id="R-HSA-442982">
    <property type="pathway name" value="Ras activation upon Ca2+ influx through NMDA receptor"/>
</dbReference>
<dbReference type="Reactome" id="R-HSA-5218921">
    <property type="pathway name" value="VEGFR2 mediated cell proliferation"/>
</dbReference>
<dbReference type="Reactome" id="R-HSA-5621575">
    <property type="pathway name" value="CD209 (DC-SIGN) signaling"/>
</dbReference>
<dbReference type="Reactome" id="R-HSA-5637810">
    <property type="pathway name" value="Constitutive Signaling by EGFRvIII"/>
</dbReference>
<dbReference type="Reactome" id="R-HSA-5654688">
    <property type="pathway name" value="SHC-mediated cascade:FGFR1"/>
</dbReference>
<dbReference type="Reactome" id="R-HSA-5654693">
    <property type="pathway name" value="FRS-mediated FGFR1 signaling"/>
</dbReference>
<dbReference type="Reactome" id="R-HSA-5654699">
    <property type="pathway name" value="SHC-mediated cascade:FGFR2"/>
</dbReference>
<dbReference type="Reactome" id="R-HSA-5654700">
    <property type="pathway name" value="FRS-mediated FGFR2 signaling"/>
</dbReference>
<dbReference type="Reactome" id="R-HSA-5654704">
    <property type="pathway name" value="SHC-mediated cascade:FGFR3"/>
</dbReference>
<dbReference type="Reactome" id="R-HSA-5654706">
    <property type="pathway name" value="FRS-mediated FGFR3 signaling"/>
</dbReference>
<dbReference type="Reactome" id="R-HSA-5654712">
    <property type="pathway name" value="FRS-mediated FGFR4 signaling"/>
</dbReference>
<dbReference type="Reactome" id="R-HSA-5654719">
    <property type="pathway name" value="SHC-mediated cascade:FGFR4"/>
</dbReference>
<dbReference type="Reactome" id="R-HSA-5655253">
    <property type="pathway name" value="Signaling by FGFR2 in disease"/>
</dbReference>
<dbReference type="Reactome" id="R-HSA-5655291">
    <property type="pathway name" value="Signaling by FGFR4 in disease"/>
</dbReference>
<dbReference type="Reactome" id="R-HSA-5655302">
    <property type="pathway name" value="Signaling by FGFR1 in disease"/>
</dbReference>
<dbReference type="Reactome" id="R-HSA-5655332">
    <property type="pathway name" value="Signaling by FGFR3 in disease"/>
</dbReference>
<dbReference type="Reactome" id="R-HSA-5658442">
    <property type="pathway name" value="Regulation of RAS by GAPs"/>
</dbReference>
<dbReference type="Reactome" id="R-HSA-5673000">
    <property type="pathway name" value="RAF activation"/>
</dbReference>
<dbReference type="Reactome" id="R-HSA-5673001">
    <property type="pathway name" value="RAF/MAP kinase cascade"/>
</dbReference>
<dbReference type="Reactome" id="R-HSA-5674135">
    <property type="pathway name" value="MAP2K and MAPK activation"/>
</dbReference>
<dbReference type="Reactome" id="R-HSA-5675221">
    <property type="pathway name" value="Negative regulation of MAPK pathway"/>
</dbReference>
<dbReference type="Reactome" id="R-HSA-6798695">
    <property type="pathway name" value="Neutrophil degranulation"/>
</dbReference>
<dbReference type="Reactome" id="R-HSA-6802946">
    <property type="pathway name" value="Signaling by moderate kinase activity BRAF mutants"/>
</dbReference>
<dbReference type="Reactome" id="R-HSA-6802948">
    <property type="pathway name" value="Signaling by high-kinase activity BRAF mutants"/>
</dbReference>
<dbReference type="Reactome" id="R-HSA-6802952">
    <property type="pathway name" value="Signaling by BRAF and RAF1 fusions"/>
</dbReference>
<dbReference type="Reactome" id="R-HSA-6802953">
    <property type="pathway name" value="RAS signaling downstream of NF1 loss-of-function variants"/>
</dbReference>
<dbReference type="Reactome" id="R-HSA-6802955">
    <property type="pathway name" value="Paradoxical activation of RAF signaling by kinase inactive BRAF"/>
</dbReference>
<dbReference type="Reactome" id="R-HSA-74751">
    <property type="pathway name" value="Insulin receptor signalling cascade"/>
</dbReference>
<dbReference type="Reactome" id="R-HSA-8849471">
    <property type="pathway name" value="PTK6 Regulates RHO GTPases, RAS GTPase and MAP kinases"/>
</dbReference>
<dbReference type="Reactome" id="R-HSA-8851805">
    <property type="pathway name" value="MET activates RAS signaling"/>
</dbReference>
<dbReference type="Reactome" id="R-HSA-9026519">
    <property type="pathway name" value="Activated NTRK2 signals through RAS"/>
</dbReference>
<dbReference type="Reactome" id="R-HSA-9027284">
    <property type="pathway name" value="Erythropoietin activates RAS"/>
</dbReference>
<dbReference type="Reactome" id="R-HSA-9028731">
    <property type="pathway name" value="Activated NTRK2 signals through FRS2 and FRS3"/>
</dbReference>
<dbReference type="Reactome" id="R-HSA-9034864">
    <property type="pathway name" value="Activated NTRK3 signals through RAS"/>
</dbReference>
<dbReference type="Reactome" id="R-HSA-9607240">
    <property type="pathway name" value="FLT3 Signaling"/>
</dbReference>
<dbReference type="Reactome" id="R-HSA-9634285">
    <property type="pathway name" value="Constitutive Signaling by Overexpressed ERBB2"/>
</dbReference>
<dbReference type="Reactome" id="R-HSA-9634635">
    <property type="pathway name" value="Estrogen-stimulated signaling through PRKCZ"/>
</dbReference>
<dbReference type="Reactome" id="R-HSA-9648002">
    <property type="pathway name" value="RAS processing"/>
</dbReference>
<dbReference type="Reactome" id="R-HSA-9649948">
    <property type="pathway name" value="Signaling downstream of RAS mutants"/>
</dbReference>
<dbReference type="Reactome" id="R-HSA-9656223">
    <property type="pathway name" value="Signaling by RAF1 mutants"/>
</dbReference>
<dbReference type="Reactome" id="R-HSA-9664565">
    <property type="pathway name" value="Signaling by ERBB2 KD Mutants"/>
</dbReference>
<dbReference type="Reactome" id="R-HSA-9665348">
    <property type="pathway name" value="Signaling by ERBB2 ECD mutants"/>
</dbReference>
<dbReference type="Reactome" id="R-HSA-9665686">
    <property type="pathway name" value="Signaling by ERBB2 TMD/JMD mutants"/>
</dbReference>
<dbReference type="Reactome" id="R-HSA-9670439">
    <property type="pathway name" value="Signaling by phosphorylated juxtamembrane, extracellular and kinase domain KIT mutants"/>
</dbReference>
<dbReference type="Reactome" id="R-HSA-9673767">
    <property type="pathway name" value="Signaling by PDGFRA transmembrane, juxtamembrane and kinase domain mutants"/>
</dbReference>
<dbReference type="Reactome" id="R-HSA-9673770">
    <property type="pathway name" value="Signaling by PDGFRA extracellular domain mutants"/>
</dbReference>
<dbReference type="Reactome" id="R-HSA-9703465">
    <property type="pathway name" value="Signaling by FLT3 fusion proteins"/>
</dbReference>
<dbReference type="Reactome" id="R-HSA-9703648">
    <property type="pathway name" value="Signaling by FLT3 ITD and TKD mutants"/>
</dbReference>
<dbReference type="Reactome" id="R-HSA-9753510">
    <property type="pathway name" value="Signaling by RAS GAP mutants"/>
</dbReference>
<dbReference type="Reactome" id="R-HSA-9753512">
    <property type="pathway name" value="Signaling by RAS GTPase mutants"/>
</dbReference>
<dbReference type="SignaLink" id="P01111"/>
<dbReference type="SIGNOR" id="P01111"/>
<dbReference type="BioGRID-ORCS" id="4893">
    <property type="hits" value="74 hits in 1167 CRISPR screens"/>
</dbReference>
<dbReference type="CD-CODE" id="FB4E32DD">
    <property type="entry name" value="Presynaptic clusters and postsynaptic densities"/>
</dbReference>
<dbReference type="ChiTaRS" id="NRAS">
    <property type="organism name" value="human"/>
</dbReference>
<dbReference type="EvolutionaryTrace" id="P01111"/>
<dbReference type="GeneWiki" id="Neuroblastoma_RAS_viral_oncogene_homolog"/>
<dbReference type="GenomeRNAi" id="4893"/>
<dbReference type="Pharos" id="P01111">
    <property type="development level" value="Tchem"/>
</dbReference>
<dbReference type="PRO" id="PR:P01111"/>
<dbReference type="Proteomes" id="UP000005640">
    <property type="component" value="Chromosome 1"/>
</dbReference>
<dbReference type="RNAct" id="P01111">
    <property type="molecule type" value="protein"/>
</dbReference>
<dbReference type="Bgee" id="ENSG00000213281">
    <property type="expression patterns" value="Expressed in gingival epithelium and 194 other cell types or tissues"/>
</dbReference>
<dbReference type="ExpressionAtlas" id="P01111">
    <property type="expression patterns" value="baseline and differential"/>
</dbReference>
<dbReference type="GO" id="GO:0005829">
    <property type="term" value="C:cytosol"/>
    <property type="evidence" value="ECO:0000304"/>
    <property type="project" value="Reactome"/>
</dbReference>
<dbReference type="GO" id="GO:0005789">
    <property type="term" value="C:endoplasmic reticulum membrane"/>
    <property type="evidence" value="ECO:0000304"/>
    <property type="project" value="Reactome"/>
</dbReference>
<dbReference type="GO" id="GO:0070062">
    <property type="term" value="C:extracellular exosome"/>
    <property type="evidence" value="ECO:0007005"/>
    <property type="project" value="UniProtKB"/>
</dbReference>
<dbReference type="GO" id="GO:0005794">
    <property type="term" value="C:Golgi apparatus"/>
    <property type="evidence" value="ECO:0000314"/>
    <property type="project" value="CACAO"/>
</dbReference>
<dbReference type="GO" id="GO:0000139">
    <property type="term" value="C:Golgi membrane"/>
    <property type="evidence" value="ECO:0000304"/>
    <property type="project" value="Reactome"/>
</dbReference>
<dbReference type="GO" id="GO:0016020">
    <property type="term" value="C:membrane"/>
    <property type="evidence" value="ECO:0007005"/>
    <property type="project" value="UniProtKB"/>
</dbReference>
<dbReference type="GO" id="GO:0005886">
    <property type="term" value="C:plasma membrane"/>
    <property type="evidence" value="ECO:0000318"/>
    <property type="project" value="GO_Central"/>
</dbReference>
<dbReference type="GO" id="GO:0070821">
    <property type="term" value="C:tertiary granule membrane"/>
    <property type="evidence" value="ECO:0000304"/>
    <property type="project" value="Reactome"/>
</dbReference>
<dbReference type="GO" id="GO:0003925">
    <property type="term" value="F:G protein activity"/>
    <property type="evidence" value="ECO:0007669"/>
    <property type="project" value="UniProtKB-EC"/>
</dbReference>
<dbReference type="GO" id="GO:0019003">
    <property type="term" value="F:GDP binding"/>
    <property type="evidence" value="ECO:0000318"/>
    <property type="project" value="GO_Central"/>
</dbReference>
<dbReference type="GO" id="GO:0005525">
    <property type="term" value="F:GTP binding"/>
    <property type="evidence" value="ECO:0000318"/>
    <property type="project" value="GO_Central"/>
</dbReference>
<dbReference type="GO" id="GO:0003924">
    <property type="term" value="F:GTPase activity"/>
    <property type="evidence" value="ECO:0000314"/>
    <property type="project" value="UniProtKB"/>
</dbReference>
<dbReference type="GO" id="GO:0044877">
    <property type="term" value="F:protein-containing complex binding"/>
    <property type="evidence" value="ECO:0000314"/>
    <property type="project" value="MGI"/>
</dbReference>
<dbReference type="GO" id="GO:0000165">
    <property type="term" value="P:MAPK cascade"/>
    <property type="evidence" value="ECO:0000304"/>
    <property type="project" value="Reactome"/>
</dbReference>
<dbReference type="GO" id="GO:0001938">
    <property type="term" value="P:positive regulation of endothelial cell proliferation"/>
    <property type="evidence" value="ECO:0000315"/>
    <property type="project" value="BHF-UCL"/>
</dbReference>
<dbReference type="GO" id="GO:0007265">
    <property type="term" value="P:Ras protein signal transduction"/>
    <property type="evidence" value="ECO:0000314"/>
    <property type="project" value="UniProtKB"/>
</dbReference>
<dbReference type="CDD" id="cd04138">
    <property type="entry name" value="H_N_K_Ras_like"/>
    <property type="match status" value="1"/>
</dbReference>
<dbReference type="FunFam" id="3.40.50.300:FF:000096">
    <property type="entry name" value="KRAS proto-oncogene, GTPase"/>
    <property type="match status" value="1"/>
</dbReference>
<dbReference type="Gene3D" id="3.40.50.300">
    <property type="entry name" value="P-loop containing nucleotide triphosphate hydrolases"/>
    <property type="match status" value="1"/>
</dbReference>
<dbReference type="InterPro" id="IPR027417">
    <property type="entry name" value="P-loop_NTPase"/>
</dbReference>
<dbReference type="InterPro" id="IPR005225">
    <property type="entry name" value="Small_GTP-bd"/>
</dbReference>
<dbReference type="InterPro" id="IPR001806">
    <property type="entry name" value="Small_GTPase"/>
</dbReference>
<dbReference type="InterPro" id="IPR020849">
    <property type="entry name" value="Small_GTPase_Ras-type"/>
</dbReference>
<dbReference type="NCBIfam" id="TIGR00231">
    <property type="entry name" value="small_GTP"/>
    <property type="match status" value="1"/>
</dbReference>
<dbReference type="PANTHER" id="PTHR24070">
    <property type="entry name" value="RAS, DI-RAS, AND RHEB FAMILY MEMBERS OF SMALL GTPASE SUPERFAMILY"/>
    <property type="match status" value="1"/>
</dbReference>
<dbReference type="Pfam" id="PF00071">
    <property type="entry name" value="Ras"/>
    <property type="match status" value="1"/>
</dbReference>
<dbReference type="PRINTS" id="PR00449">
    <property type="entry name" value="RASTRNSFRMNG"/>
</dbReference>
<dbReference type="SMART" id="SM00175">
    <property type="entry name" value="RAB"/>
    <property type="match status" value="1"/>
</dbReference>
<dbReference type="SMART" id="SM00173">
    <property type="entry name" value="RAS"/>
    <property type="match status" value="1"/>
</dbReference>
<dbReference type="SMART" id="SM00174">
    <property type="entry name" value="RHO"/>
    <property type="match status" value="1"/>
</dbReference>
<dbReference type="SUPFAM" id="SSF52540">
    <property type="entry name" value="P-loop containing nucleoside triphosphate hydrolases"/>
    <property type="match status" value="1"/>
</dbReference>
<dbReference type="PROSITE" id="PS51421">
    <property type="entry name" value="RAS"/>
    <property type="match status" value="1"/>
</dbReference>